<organism>
    <name type="scientific">Shewanella sp. (strain MR-7)</name>
    <dbReference type="NCBI Taxonomy" id="60481"/>
    <lineage>
        <taxon>Bacteria</taxon>
        <taxon>Pseudomonadati</taxon>
        <taxon>Pseudomonadota</taxon>
        <taxon>Gammaproteobacteria</taxon>
        <taxon>Alteromonadales</taxon>
        <taxon>Shewanellaceae</taxon>
        <taxon>Shewanella</taxon>
    </lineage>
</organism>
<sequence length="205" mass="22381">MSNIVWHQHSVDQADRAKLKGQNPVLLWFTGLSGAGKSTLAGALERALFDAGFHTYLLDGDNVRHGLCKDLGFSVADRDENLRRVGEVAKLMVDAGLVVLSAFISPTREERDSIRARFPEGQFIEVHVSTPLSICEQRDPKGLYVKARRGEISNFTGISSPYEAPLSAELTIDTSKGDLASQVRALIDYLTAIEVINPSRLTASA</sequence>
<comment type="function">
    <text evidence="1">Catalyzes the synthesis of activated sulfate.</text>
</comment>
<comment type="catalytic activity">
    <reaction evidence="1">
        <text>adenosine 5'-phosphosulfate + ATP = 3'-phosphoadenylyl sulfate + ADP + H(+)</text>
        <dbReference type="Rhea" id="RHEA:24152"/>
        <dbReference type="ChEBI" id="CHEBI:15378"/>
        <dbReference type="ChEBI" id="CHEBI:30616"/>
        <dbReference type="ChEBI" id="CHEBI:58243"/>
        <dbReference type="ChEBI" id="CHEBI:58339"/>
        <dbReference type="ChEBI" id="CHEBI:456216"/>
        <dbReference type="EC" id="2.7.1.25"/>
    </reaction>
</comment>
<comment type="pathway">
    <text evidence="1">Sulfur metabolism; hydrogen sulfide biosynthesis; sulfite from sulfate: step 2/3.</text>
</comment>
<comment type="similarity">
    <text evidence="1">Belongs to the APS kinase family.</text>
</comment>
<dbReference type="EC" id="2.7.1.25" evidence="1"/>
<dbReference type="EMBL" id="CP000444">
    <property type="protein sequence ID" value="ABI41902.1"/>
    <property type="molecule type" value="Genomic_DNA"/>
</dbReference>
<dbReference type="SMR" id="Q0HYA3"/>
<dbReference type="KEGG" id="shm:Shewmr7_0903"/>
<dbReference type="HOGENOM" id="CLU_046932_1_1_6"/>
<dbReference type="UniPathway" id="UPA00140">
    <property type="reaction ID" value="UER00205"/>
</dbReference>
<dbReference type="GO" id="GO:0004020">
    <property type="term" value="F:adenylylsulfate kinase activity"/>
    <property type="evidence" value="ECO:0007669"/>
    <property type="project" value="UniProtKB-UniRule"/>
</dbReference>
<dbReference type="GO" id="GO:0005524">
    <property type="term" value="F:ATP binding"/>
    <property type="evidence" value="ECO:0007669"/>
    <property type="project" value="UniProtKB-UniRule"/>
</dbReference>
<dbReference type="GO" id="GO:0070814">
    <property type="term" value="P:hydrogen sulfide biosynthetic process"/>
    <property type="evidence" value="ECO:0007669"/>
    <property type="project" value="UniProtKB-UniRule"/>
</dbReference>
<dbReference type="GO" id="GO:0000103">
    <property type="term" value="P:sulfate assimilation"/>
    <property type="evidence" value="ECO:0007669"/>
    <property type="project" value="UniProtKB-UniRule"/>
</dbReference>
<dbReference type="CDD" id="cd02027">
    <property type="entry name" value="APSK"/>
    <property type="match status" value="1"/>
</dbReference>
<dbReference type="FunFam" id="3.40.50.300:FF:000212">
    <property type="entry name" value="Adenylyl-sulfate kinase"/>
    <property type="match status" value="1"/>
</dbReference>
<dbReference type="Gene3D" id="3.40.50.300">
    <property type="entry name" value="P-loop containing nucleotide triphosphate hydrolases"/>
    <property type="match status" value="1"/>
</dbReference>
<dbReference type="HAMAP" id="MF_00065">
    <property type="entry name" value="Adenylyl_sulf_kinase"/>
    <property type="match status" value="1"/>
</dbReference>
<dbReference type="InterPro" id="IPR002891">
    <property type="entry name" value="APS_kinase"/>
</dbReference>
<dbReference type="InterPro" id="IPR027417">
    <property type="entry name" value="P-loop_NTPase"/>
</dbReference>
<dbReference type="NCBIfam" id="TIGR00455">
    <property type="entry name" value="apsK"/>
    <property type="match status" value="1"/>
</dbReference>
<dbReference type="NCBIfam" id="NF003013">
    <property type="entry name" value="PRK03846.1"/>
    <property type="match status" value="1"/>
</dbReference>
<dbReference type="PANTHER" id="PTHR11055:SF63">
    <property type="entry name" value="ADENYLYL-SULFATE KINASE 1, CHLOROPLASTIC"/>
    <property type="match status" value="1"/>
</dbReference>
<dbReference type="PANTHER" id="PTHR11055">
    <property type="entry name" value="BIFUNCTIONAL 3'-PHOSPHOADENOSINE 5'-PHOSPHOSULFATE SYNTHASE"/>
    <property type="match status" value="1"/>
</dbReference>
<dbReference type="Pfam" id="PF01583">
    <property type="entry name" value="APS_kinase"/>
    <property type="match status" value="1"/>
</dbReference>
<dbReference type="SUPFAM" id="SSF52540">
    <property type="entry name" value="P-loop containing nucleoside triphosphate hydrolases"/>
    <property type="match status" value="1"/>
</dbReference>
<protein>
    <recommendedName>
        <fullName evidence="1">Adenylyl-sulfate kinase</fullName>
        <ecNumber evidence="1">2.7.1.25</ecNumber>
    </recommendedName>
    <alternativeName>
        <fullName evidence="1">APS kinase</fullName>
    </alternativeName>
    <alternativeName>
        <fullName evidence="1">ATP adenosine-5'-phosphosulfate 3'-phosphotransferase</fullName>
    </alternativeName>
    <alternativeName>
        <fullName evidence="1">Adenosine-5'-phosphosulfate kinase</fullName>
    </alternativeName>
</protein>
<keyword id="KW-0067">ATP-binding</keyword>
<keyword id="KW-0418">Kinase</keyword>
<keyword id="KW-0547">Nucleotide-binding</keyword>
<keyword id="KW-0597">Phosphoprotein</keyword>
<keyword id="KW-0808">Transferase</keyword>
<evidence type="ECO:0000255" key="1">
    <source>
        <dbReference type="HAMAP-Rule" id="MF_00065"/>
    </source>
</evidence>
<accession>Q0HYA3</accession>
<reference key="1">
    <citation type="submission" date="2006-08" db="EMBL/GenBank/DDBJ databases">
        <title>Complete sequence of chromosome 1 of Shewanella sp. MR-7.</title>
        <authorList>
            <person name="Copeland A."/>
            <person name="Lucas S."/>
            <person name="Lapidus A."/>
            <person name="Barry K."/>
            <person name="Detter J.C."/>
            <person name="Glavina del Rio T."/>
            <person name="Hammon N."/>
            <person name="Israni S."/>
            <person name="Dalin E."/>
            <person name="Tice H."/>
            <person name="Pitluck S."/>
            <person name="Kiss H."/>
            <person name="Brettin T."/>
            <person name="Bruce D."/>
            <person name="Han C."/>
            <person name="Tapia R."/>
            <person name="Gilna P."/>
            <person name="Schmutz J."/>
            <person name="Larimer F."/>
            <person name="Land M."/>
            <person name="Hauser L."/>
            <person name="Kyrpides N."/>
            <person name="Mikhailova N."/>
            <person name="Nealson K."/>
            <person name="Konstantinidis K."/>
            <person name="Klappenbach J."/>
            <person name="Tiedje J."/>
            <person name="Richardson P."/>
        </authorList>
    </citation>
    <scope>NUCLEOTIDE SEQUENCE [LARGE SCALE GENOMIC DNA]</scope>
    <source>
        <strain>MR-7</strain>
    </source>
</reference>
<name>CYSC_SHESR</name>
<gene>
    <name evidence="1" type="primary">cysC</name>
    <name type="ordered locus">Shewmr7_0903</name>
</gene>
<feature type="chain" id="PRO_1000009029" description="Adenylyl-sulfate kinase">
    <location>
        <begin position="1"/>
        <end position="205"/>
    </location>
</feature>
<feature type="active site" description="Phosphoserine intermediate" evidence="1">
    <location>
        <position position="105"/>
    </location>
</feature>
<feature type="binding site" evidence="1">
    <location>
        <begin position="31"/>
        <end position="38"/>
    </location>
    <ligand>
        <name>ATP</name>
        <dbReference type="ChEBI" id="CHEBI:30616"/>
    </ligand>
</feature>
<proteinExistence type="inferred from homology"/>